<gene>
    <name type="primary">rpoZ</name>
    <name type="ordered locus">spyM18_1640</name>
</gene>
<sequence>MLKPSIDTLLDKVPSKYSLVILQAKRAHELEAGATPTQEFKSVKSTLQALEEIESGNVVIHPDPSAKREAVRAKIEAERLAKEEEERKIKEQIAKEKEEEGEKI</sequence>
<evidence type="ECO:0000250" key="1"/>
<evidence type="ECO:0000305" key="2"/>
<name>RPOZ_STRP8</name>
<reference key="1">
    <citation type="journal article" date="2002" name="Proc. Natl. Acad. Sci. U.S.A.">
        <title>Genome sequence and comparative microarray analysis of serotype M18 group A Streptococcus strains associated with acute rheumatic fever outbreaks.</title>
        <authorList>
            <person name="Smoot J.C."/>
            <person name="Barbian K.D."/>
            <person name="Van Gompel J.J."/>
            <person name="Smoot L.M."/>
            <person name="Chaussee M.S."/>
            <person name="Sylva G.L."/>
            <person name="Sturdevant D.E."/>
            <person name="Ricklefs S.M."/>
            <person name="Porcella S.F."/>
            <person name="Parkins L.D."/>
            <person name="Beres S.B."/>
            <person name="Campbell D.S."/>
            <person name="Smith T.M."/>
            <person name="Zhang Q."/>
            <person name="Kapur V."/>
            <person name="Daly J.A."/>
            <person name="Veasy L.G."/>
            <person name="Musser J.M."/>
        </authorList>
    </citation>
    <scope>NUCLEOTIDE SEQUENCE [LARGE SCALE GENOMIC DNA]</scope>
    <source>
        <strain>MGAS8232</strain>
    </source>
</reference>
<protein>
    <recommendedName>
        <fullName>DNA-directed RNA polymerase subunit omega</fullName>
        <shortName>RNAP omega subunit</shortName>
        <ecNumber>2.7.7.6</ecNumber>
    </recommendedName>
    <alternativeName>
        <fullName>RNA polymerase omega subunit</fullName>
    </alternativeName>
    <alternativeName>
        <fullName>Transcriptase subunit omega</fullName>
    </alternativeName>
</protein>
<comment type="function">
    <text evidence="1">Promotes RNA polymerase assembly. Latches the N- and C-terminal regions of the beta' subunit thereby facilitating its interaction with the beta and alpha subunits (By similarity).</text>
</comment>
<comment type="catalytic activity">
    <reaction>
        <text>RNA(n) + a ribonucleoside 5'-triphosphate = RNA(n+1) + diphosphate</text>
        <dbReference type="Rhea" id="RHEA:21248"/>
        <dbReference type="Rhea" id="RHEA-COMP:14527"/>
        <dbReference type="Rhea" id="RHEA-COMP:17342"/>
        <dbReference type="ChEBI" id="CHEBI:33019"/>
        <dbReference type="ChEBI" id="CHEBI:61557"/>
        <dbReference type="ChEBI" id="CHEBI:140395"/>
        <dbReference type="EC" id="2.7.7.6"/>
    </reaction>
</comment>
<comment type="subunit">
    <text evidence="1">The RNAP catalytic core consists of 2 alpha, 1 beta, 1 beta' and 1 omega subunit. When a sigma factor is associated with the core the holoenzyme is formed, which can initiate transcription (By similarity).</text>
</comment>
<comment type="similarity">
    <text evidence="2">Belongs to the RNA polymerase subunit omega family.</text>
</comment>
<organism>
    <name type="scientific">Streptococcus pyogenes serotype M18 (strain MGAS8232)</name>
    <dbReference type="NCBI Taxonomy" id="186103"/>
    <lineage>
        <taxon>Bacteria</taxon>
        <taxon>Bacillati</taxon>
        <taxon>Bacillota</taxon>
        <taxon>Bacilli</taxon>
        <taxon>Lactobacillales</taxon>
        <taxon>Streptococcaceae</taxon>
        <taxon>Streptococcus</taxon>
    </lineage>
</organism>
<dbReference type="EC" id="2.7.7.6"/>
<dbReference type="EMBL" id="AE009949">
    <property type="protein sequence ID" value="AAL98190.1"/>
    <property type="molecule type" value="Genomic_DNA"/>
</dbReference>
<dbReference type="SMR" id="P68842"/>
<dbReference type="KEGG" id="spm:spyM18_1640"/>
<dbReference type="HOGENOM" id="CLU_125406_0_0_9"/>
<dbReference type="GO" id="GO:0000428">
    <property type="term" value="C:DNA-directed RNA polymerase complex"/>
    <property type="evidence" value="ECO:0007669"/>
    <property type="project" value="UniProtKB-KW"/>
</dbReference>
<dbReference type="GO" id="GO:0003677">
    <property type="term" value="F:DNA binding"/>
    <property type="evidence" value="ECO:0007669"/>
    <property type="project" value="UniProtKB-UniRule"/>
</dbReference>
<dbReference type="GO" id="GO:0003899">
    <property type="term" value="F:DNA-directed RNA polymerase activity"/>
    <property type="evidence" value="ECO:0007669"/>
    <property type="project" value="UniProtKB-UniRule"/>
</dbReference>
<dbReference type="GO" id="GO:0006351">
    <property type="term" value="P:DNA-templated transcription"/>
    <property type="evidence" value="ECO:0007669"/>
    <property type="project" value="UniProtKB-UniRule"/>
</dbReference>
<dbReference type="Gene3D" id="3.90.940.10">
    <property type="match status" value="1"/>
</dbReference>
<dbReference type="HAMAP" id="MF_00366">
    <property type="entry name" value="RNApol_bact_RpoZ"/>
    <property type="match status" value="1"/>
</dbReference>
<dbReference type="InterPro" id="IPR003716">
    <property type="entry name" value="DNA-dir_RNA_pol_omega"/>
</dbReference>
<dbReference type="InterPro" id="IPR006110">
    <property type="entry name" value="Pol_omega/Rpo6/RPB6"/>
</dbReference>
<dbReference type="InterPro" id="IPR036161">
    <property type="entry name" value="RPB6/omega-like_sf"/>
</dbReference>
<dbReference type="NCBIfam" id="TIGR00690">
    <property type="entry name" value="rpoZ"/>
    <property type="match status" value="1"/>
</dbReference>
<dbReference type="PANTHER" id="PTHR34476">
    <property type="entry name" value="DNA-DIRECTED RNA POLYMERASE SUBUNIT OMEGA"/>
    <property type="match status" value="1"/>
</dbReference>
<dbReference type="PANTHER" id="PTHR34476:SF1">
    <property type="entry name" value="DNA-DIRECTED RNA POLYMERASE SUBUNIT OMEGA"/>
    <property type="match status" value="1"/>
</dbReference>
<dbReference type="Pfam" id="PF01192">
    <property type="entry name" value="RNA_pol_Rpb6"/>
    <property type="match status" value="1"/>
</dbReference>
<dbReference type="SMART" id="SM01409">
    <property type="entry name" value="RNA_pol_Rpb6"/>
    <property type="match status" value="1"/>
</dbReference>
<dbReference type="SUPFAM" id="SSF63562">
    <property type="entry name" value="RPB6/omega subunit-like"/>
    <property type="match status" value="1"/>
</dbReference>
<accession>P68842</accession>
<accession>P82577</accession>
<keyword id="KW-0240">DNA-directed RNA polymerase</keyword>
<keyword id="KW-0548">Nucleotidyltransferase</keyword>
<keyword id="KW-0804">Transcription</keyword>
<keyword id="KW-0808">Transferase</keyword>
<feature type="chain" id="PRO_0000128998" description="DNA-directed RNA polymerase subunit omega">
    <location>
        <begin position="1"/>
        <end position="104"/>
    </location>
</feature>
<proteinExistence type="inferred from homology"/>